<reference key="1">
    <citation type="journal article" date="2003" name="J. Biosci. Bioeng.">
        <title>Cloning and characterization of a 4-nitrophenol hydroxylase gene cluster from Rhodococcus sp. PN1.</title>
        <authorList>
            <person name="Takeo M."/>
            <person name="Yasukawa T."/>
            <person name="Abe Y."/>
            <person name="Niihara S."/>
            <person name="Maeda Y."/>
            <person name="Negoro S."/>
        </authorList>
    </citation>
    <scope>NUCLEOTIDE SEQUENCE [GENOMIC DNA]</scope>
    <scope>FUNCTION IN THE DEGRADATION OF 4-NITROPHENOL</scope>
    <source>
        <strain>PN1</strain>
    </source>
</reference>
<reference key="2">
    <citation type="journal article" date="2008" name="J. Bacteriol.">
        <title>Mechanism of 4-nitrophenol oxidation in Rhodococcus sp. Strain PN1: characterization of the two-component 4-nitrophenol hydroxylase and regulation of its expression.</title>
        <authorList>
            <person name="Takeo M."/>
            <person name="Murakami M."/>
            <person name="Niihara S."/>
            <person name="Yamamoto K."/>
            <person name="Nishimura M."/>
            <person name="Kato D."/>
            <person name="Negoro S."/>
        </authorList>
    </citation>
    <scope>NUCLEOTIDE SEQUENCE [GENOMIC DNA]</scope>
    <scope>FUNCTION AS A 4-NITROPHENOL 2-MONOOXYGENASE</scope>
    <scope>CATALYTIC ACTIVITY</scope>
    <scope>BIOPHYSICOCHEMICAL PROPERTIES</scope>
    <scope>INDUCTION</scope>
    <scope>SUBUNIT</scope>
    <source>
        <strain>PN1</strain>
    </source>
</reference>
<name>NPHA2_RHOSO</name>
<protein>
    <recommendedName>
        <fullName>NADH-dependent flavin reductase</fullName>
        <ecNumber>1.5.1.36</ecNumber>
    </recommendedName>
    <alternativeName>
        <fullName>4-nitrophenol 2-monooxygenase, flavin reductase component</fullName>
    </alternativeName>
    <alternativeName>
        <fullName>4-nitrophenol hydroxylase, flavin reductase component</fullName>
        <shortName>4-NP hydroxylase, flavin reductase component</shortName>
    </alternativeName>
    <alternativeName>
        <fullName>Two-component 4-nitrophenol hydroxylase</fullName>
    </alternativeName>
</protein>
<sequence length="176" mass="19174">MTETAGELDPEVTPLHLRKALGRFASGVTIVTTAECEDEDSVHGMTANAFTSVSLDPPLVLVSISTRAKMDTKIRETGTYGISILAGDQEPVSLHFAGAAHEPDRVRFVWRRGVPLLEGALVHLACTVVASHPAGDHTLHVGRVEQLWYDDGHPLVFYTGSFRSLELLGRDEPWGF</sequence>
<proteinExistence type="evidence at protein level"/>
<keyword id="KW-0274">FAD</keyword>
<keyword id="KW-0285">Flavoprotein</keyword>
<keyword id="KW-0520">NAD</keyword>
<keyword id="KW-0560">Oxidoreductase</keyword>
<dbReference type="EC" id="1.5.1.36"/>
<dbReference type="EMBL" id="AB081773">
    <property type="protein sequence ID" value="BAB86379.2"/>
    <property type="molecule type" value="Genomic_DNA"/>
</dbReference>
<dbReference type="SMR" id="Q8RQP9"/>
<dbReference type="BioCyc" id="MetaCyc:MONOMER-13018"/>
<dbReference type="GO" id="GO:0071949">
    <property type="term" value="F:FAD binding"/>
    <property type="evidence" value="ECO:0000314"/>
    <property type="project" value="UniProtKB"/>
</dbReference>
<dbReference type="GO" id="GO:0036382">
    <property type="term" value="F:flavin reductase (NADH) activity"/>
    <property type="evidence" value="ECO:0000314"/>
    <property type="project" value="UniProtKB"/>
</dbReference>
<dbReference type="GO" id="GO:0010181">
    <property type="term" value="F:FMN binding"/>
    <property type="evidence" value="ECO:0007669"/>
    <property type="project" value="InterPro"/>
</dbReference>
<dbReference type="GO" id="GO:0051287">
    <property type="term" value="F:NAD binding"/>
    <property type="evidence" value="ECO:0000314"/>
    <property type="project" value="UniProtKB"/>
</dbReference>
<dbReference type="GO" id="GO:0042602">
    <property type="term" value="F:riboflavin reductase (NADPH) activity"/>
    <property type="evidence" value="ECO:0007669"/>
    <property type="project" value="TreeGrafter"/>
</dbReference>
<dbReference type="GO" id="GO:0046196">
    <property type="term" value="P:4-nitrophenol catabolic process"/>
    <property type="evidence" value="ECO:0000314"/>
    <property type="project" value="UniProtKB"/>
</dbReference>
<dbReference type="GO" id="GO:0006208">
    <property type="term" value="P:pyrimidine nucleobase catabolic process"/>
    <property type="evidence" value="ECO:0007669"/>
    <property type="project" value="TreeGrafter"/>
</dbReference>
<dbReference type="FunFam" id="2.30.110.10:FF:000077">
    <property type="entry name" value="Putative 4-nitrophenol hydroxylase component B"/>
    <property type="match status" value="1"/>
</dbReference>
<dbReference type="Gene3D" id="2.30.110.10">
    <property type="entry name" value="Electron Transport, Fmn-binding Protein, Chain A"/>
    <property type="match status" value="1"/>
</dbReference>
<dbReference type="InterPro" id="IPR002563">
    <property type="entry name" value="Flavin_Rdtase-like_dom"/>
</dbReference>
<dbReference type="InterPro" id="IPR050268">
    <property type="entry name" value="NADH-dep_flavin_reductase"/>
</dbReference>
<dbReference type="InterPro" id="IPR012349">
    <property type="entry name" value="Split_barrel_FMN-bd"/>
</dbReference>
<dbReference type="PANTHER" id="PTHR30466">
    <property type="entry name" value="FLAVIN REDUCTASE"/>
    <property type="match status" value="1"/>
</dbReference>
<dbReference type="PANTHER" id="PTHR30466:SF1">
    <property type="entry name" value="FMN REDUCTASE (NADH) RUTF"/>
    <property type="match status" value="1"/>
</dbReference>
<dbReference type="Pfam" id="PF01613">
    <property type="entry name" value="Flavin_Reduct"/>
    <property type="match status" value="1"/>
</dbReference>
<dbReference type="SMART" id="SM00903">
    <property type="entry name" value="Flavin_Reduct"/>
    <property type="match status" value="1"/>
</dbReference>
<dbReference type="SUPFAM" id="SSF50475">
    <property type="entry name" value="FMN-binding split barrel"/>
    <property type="match status" value="1"/>
</dbReference>
<organism>
    <name type="scientific">Rhodococcus sp</name>
    <dbReference type="NCBI Taxonomy" id="1831"/>
    <lineage>
        <taxon>Bacteria</taxon>
        <taxon>Bacillati</taxon>
        <taxon>Actinomycetota</taxon>
        <taxon>Actinomycetes</taxon>
        <taxon>Mycobacteriales</taxon>
        <taxon>Nocardiaceae</taxon>
        <taxon>Rhodococcus</taxon>
    </lineage>
</organism>
<feature type="chain" id="PRO_0000418988" description="NADH-dependent flavin reductase">
    <location>
        <begin position="1"/>
        <end position="176"/>
    </location>
</feature>
<feature type="binding site" evidence="1">
    <location>
        <begin position="39"/>
        <end position="46"/>
    </location>
    <ligand>
        <name>FAD</name>
        <dbReference type="ChEBI" id="CHEBI:57692"/>
    </ligand>
</feature>
<feature type="binding site" evidence="1">
    <location>
        <begin position="48"/>
        <end position="49"/>
    </location>
    <ligand>
        <name>FAD</name>
        <dbReference type="ChEBI" id="CHEBI:57692"/>
    </ligand>
</feature>
<feature type="binding site" evidence="1">
    <location>
        <position position="52"/>
    </location>
    <ligand>
        <name>NAD(+)</name>
        <dbReference type="ChEBI" id="CHEBI:57540"/>
    </ligand>
</feature>
<feature type="binding site" evidence="1">
    <location>
        <begin position="63"/>
        <end position="65"/>
    </location>
    <ligand>
        <name>FAD</name>
        <dbReference type="ChEBI" id="CHEBI:57692"/>
    </ligand>
</feature>
<feature type="binding site" evidence="1">
    <location>
        <begin position="69"/>
        <end position="70"/>
    </location>
    <ligand>
        <name>FAD</name>
        <dbReference type="ChEBI" id="CHEBI:57692"/>
    </ligand>
</feature>
<feature type="binding site" evidence="1">
    <location>
        <begin position="95"/>
        <end position="96"/>
    </location>
    <ligand>
        <name>FAD</name>
        <dbReference type="ChEBI" id="CHEBI:57692"/>
    </ligand>
</feature>
<feature type="binding site" evidence="1">
    <location>
        <position position="137"/>
    </location>
    <ligand>
        <name>NAD(+)</name>
        <dbReference type="ChEBI" id="CHEBI:57540"/>
    </ligand>
</feature>
<feature type="binding site" evidence="1">
    <location>
        <begin position="157"/>
        <end position="160"/>
    </location>
    <ligand>
        <name>NAD(+)</name>
        <dbReference type="ChEBI" id="CHEBI:57540"/>
    </ligand>
</feature>
<gene>
    <name type="primary">nphA2</name>
</gene>
<comment type="function">
    <text evidence="2 3">Catalyzes the reduction of FAD with the concomitant oxidation of NADH. NAD is the physiological electron donor. Subsequently, the reduced flavins diffuse to the oxygenase component NphA2.</text>
</comment>
<comment type="catalytic activity">
    <reaction evidence="3">
        <text>a reduced flavin + NAD(+) = an oxidized flavin + NADH + 2 H(+)</text>
        <dbReference type="Rhea" id="RHEA:31303"/>
        <dbReference type="ChEBI" id="CHEBI:15378"/>
        <dbReference type="ChEBI" id="CHEBI:57540"/>
        <dbReference type="ChEBI" id="CHEBI:57945"/>
        <dbReference type="ChEBI" id="CHEBI:60531"/>
        <dbReference type="ChEBI" id="CHEBI:62787"/>
        <dbReference type="EC" id="1.5.1.36"/>
    </reaction>
</comment>
<comment type="biophysicochemical properties">
    <kinetics>
        <KM evidence="3">58.1 uM for NADH (with 0.5 mM of FAD at 22 degrees Celsius and at pH 7.5)</KM>
        <KM evidence="3">271 uM for FAD (with 0.3 mM of NADH at 22 degrees Celsius and at pH 7.5)</KM>
        <Vmax evidence="3">17.6 umol/min/mg enzyme with NADH as substrate (with 0.5 mM of FAD at 22 degrees Celsius and at pH 7.5)</Vmax>
        <Vmax evidence="3">18.3 umol/min/mg enzyme with FAD as substrate (with 0.3 mM of NADH at 22 degrees Celsius and at pH 7.5)</Vmax>
    </kinetics>
    <phDependence>
        <text evidence="3">Optimum pH is 7.5.</text>
    </phDependence>
</comment>
<comment type="subunit">
    <text evidence="3">Homodimer. 4-nitrophenol 2-monooxygenase complex consists of an oxygenase component NphA1 and a flavin reductase component NphA2.</text>
</comment>
<comment type="induction">
    <text evidence="5">By 4-NP in the presence of NphR.</text>
</comment>
<comment type="similarity">
    <text evidence="4">Belongs to the non-flavoprotein flavin reductase family.</text>
</comment>
<evidence type="ECO:0000250" key="1"/>
<evidence type="ECO:0000269" key="2">
    <source>
    </source>
</evidence>
<evidence type="ECO:0000269" key="3">
    <source>
    </source>
</evidence>
<evidence type="ECO:0000305" key="4"/>
<evidence type="ECO:0000305" key="5">
    <source>
    </source>
</evidence>
<accession>Q8RQP9</accession>